<name>GLN1B_AZOC5</name>
<protein>
    <recommendedName>
        <fullName evidence="1">Glutamine synthetase</fullName>
        <shortName evidence="1">GS</shortName>
        <ecNumber evidence="1">6.3.1.2</ecNumber>
    </recommendedName>
    <alternativeName>
        <fullName evidence="8">Glutamate--ammonia ligase</fullName>
    </alternativeName>
    <alternativeName>
        <fullName evidence="1">Glutamine synthetase I beta</fullName>
        <shortName evidence="1">GSI beta</shortName>
    </alternativeName>
</protein>
<sequence>MKTAKEVLDFIKSNDVKYVDLRFTDPRGKWQHVTFDITMVDEDFFAEGQAFDGSSIAGWKAINESDMLLMPDVTTACVDPFFSETTLSVVCDVLEPTTGEPYGRDPRGIAKKAMAYLQSTGIGDTVFFGPEAEFFIFDDVKFKADPYNTGFKLDSIELPTNGDTDYEGGNLGHRIKTKGGYFPVPPLDSAQDMRSEMLASMAKMGAKVEKHHHEVASAQHELGLKFGQLVTMADHLQVYKYCIHQVANIYGKTATFMPKPVYGDNGSGMHVHQSIWKDGKPLFAGDKYADLSQECLWYIGGVIKHAKSLNAFTNPLTNSYKRLVPGYEAPVLLAYSARNRSASCRIPYTNNPKAKRVEVRFPDPGANPYLAFSALFMAGMDGILNKIDPGSAMDKDLYDLPPAELKQIPTVCGSLREALESLAKDHDYLLKGDVFQKDFIESYIDLKMQEVARFEMTPHPVEFEMYYSV</sequence>
<organism>
    <name type="scientific">Azorhizobium caulinodans (strain ATCC 43989 / DSM 5975 / JCM 20966 / LMG 6465 / NBRC 14845 / NCIMB 13405 / ORS 571)</name>
    <dbReference type="NCBI Taxonomy" id="438753"/>
    <lineage>
        <taxon>Bacteria</taxon>
        <taxon>Pseudomonadati</taxon>
        <taxon>Pseudomonadota</taxon>
        <taxon>Alphaproteobacteria</taxon>
        <taxon>Hyphomicrobiales</taxon>
        <taxon>Xanthobacteraceae</taxon>
        <taxon>Azorhizobium</taxon>
    </lineage>
</organism>
<evidence type="ECO:0000250" key="1">
    <source>
        <dbReference type="UniProtKB" id="P0A1P6"/>
    </source>
</evidence>
<evidence type="ECO:0000250" key="2">
    <source>
        <dbReference type="UniProtKB" id="P12425"/>
    </source>
</evidence>
<evidence type="ECO:0000250" key="3">
    <source>
        <dbReference type="UniProtKB" id="P77961"/>
    </source>
</evidence>
<evidence type="ECO:0000250" key="4">
    <source>
        <dbReference type="UniProtKB" id="P9WN39"/>
    </source>
</evidence>
<evidence type="ECO:0000250" key="5">
    <source>
        <dbReference type="UniProtKB" id="Q3V5W6"/>
    </source>
</evidence>
<evidence type="ECO:0000255" key="6">
    <source>
        <dbReference type="PROSITE-ProRule" id="PRU01330"/>
    </source>
</evidence>
<evidence type="ECO:0000255" key="7">
    <source>
        <dbReference type="PROSITE-ProRule" id="PRU01331"/>
    </source>
</evidence>
<evidence type="ECO:0000305" key="8"/>
<proteinExistence type="inferred from homology"/>
<feature type="chain" id="PRO_0000153230" description="Glutamine synthetase">
    <location>
        <begin position="1"/>
        <end position="469"/>
    </location>
</feature>
<feature type="domain" description="GS beta-grasp" evidence="6">
    <location>
        <begin position="14"/>
        <end position="98"/>
    </location>
</feature>
<feature type="domain" description="GS catalytic" evidence="7">
    <location>
        <begin position="106"/>
        <end position="469"/>
    </location>
</feature>
<feature type="binding site" evidence="4">
    <location>
        <position position="131"/>
    </location>
    <ligand>
        <name>Mg(2+)</name>
        <dbReference type="ChEBI" id="CHEBI:18420"/>
        <label>1</label>
    </ligand>
</feature>
<feature type="binding site" evidence="4">
    <location>
        <position position="133"/>
    </location>
    <ligand>
        <name>Mg(2+)</name>
        <dbReference type="ChEBI" id="CHEBI:18420"/>
        <label>2</label>
    </ligand>
</feature>
<feature type="binding site" evidence="1">
    <location>
        <position position="209"/>
    </location>
    <ligand>
        <name>ATP</name>
        <dbReference type="ChEBI" id="CHEBI:30616"/>
    </ligand>
</feature>
<feature type="binding site" evidence="4">
    <location>
        <position position="214"/>
    </location>
    <ligand>
        <name>Mg(2+)</name>
        <dbReference type="ChEBI" id="CHEBI:18420"/>
        <label>2</label>
    </ligand>
</feature>
<feature type="binding site" evidence="4">
    <location>
        <position position="221"/>
    </location>
    <ligand>
        <name>Mg(2+)</name>
        <dbReference type="ChEBI" id="CHEBI:18420"/>
        <label>2</label>
    </ligand>
</feature>
<feature type="binding site" evidence="1">
    <location>
        <begin position="265"/>
        <end position="266"/>
    </location>
    <ligand>
        <name>L-glutamate</name>
        <dbReference type="ChEBI" id="CHEBI:29985"/>
    </ligand>
</feature>
<feature type="binding site" evidence="2">
    <location>
        <position position="266"/>
    </location>
    <ligand>
        <name>L-glutamate</name>
        <dbReference type="ChEBI" id="CHEBI:29985"/>
    </ligand>
</feature>
<feature type="binding site" evidence="4">
    <location>
        <position position="270"/>
    </location>
    <ligand>
        <name>Mg(2+)</name>
        <dbReference type="ChEBI" id="CHEBI:18420"/>
        <label>1</label>
    </ligand>
</feature>
<feature type="binding site" evidence="1">
    <location>
        <begin position="272"/>
        <end position="274"/>
    </location>
    <ligand>
        <name>ATP</name>
        <dbReference type="ChEBI" id="CHEBI:30616"/>
    </ligand>
</feature>
<feature type="binding site" evidence="3">
    <location>
        <position position="274"/>
    </location>
    <ligand>
        <name>ATP</name>
        <dbReference type="ChEBI" id="CHEBI:30616"/>
    </ligand>
</feature>
<feature type="binding site" evidence="1">
    <location>
        <position position="322"/>
    </location>
    <ligand>
        <name>L-glutamate</name>
        <dbReference type="ChEBI" id="CHEBI:29985"/>
    </ligand>
</feature>
<feature type="binding site" evidence="1">
    <location>
        <position position="328"/>
    </location>
    <ligand>
        <name>L-glutamate</name>
        <dbReference type="ChEBI" id="CHEBI:29985"/>
    </ligand>
</feature>
<feature type="binding site" evidence="4">
    <location>
        <position position="340"/>
    </location>
    <ligand>
        <name>ATP</name>
        <dbReference type="ChEBI" id="CHEBI:30616"/>
    </ligand>
</feature>
<feature type="binding site" evidence="4">
    <location>
        <position position="340"/>
    </location>
    <ligand>
        <name>L-glutamate</name>
        <dbReference type="ChEBI" id="CHEBI:29985"/>
    </ligand>
</feature>
<feature type="binding site" evidence="4">
    <location>
        <position position="345"/>
    </location>
    <ligand>
        <name>ATP</name>
        <dbReference type="ChEBI" id="CHEBI:30616"/>
    </ligand>
</feature>
<feature type="binding site" evidence="3">
    <location>
        <position position="353"/>
    </location>
    <ligand>
        <name>ATP</name>
        <dbReference type="ChEBI" id="CHEBI:30616"/>
    </ligand>
</feature>
<feature type="binding site" evidence="4">
    <location>
        <position position="358"/>
    </location>
    <ligand>
        <name>Mg(2+)</name>
        <dbReference type="ChEBI" id="CHEBI:18420"/>
        <label>1</label>
    </ligand>
</feature>
<feature type="binding site" evidence="1">
    <location>
        <position position="360"/>
    </location>
    <ligand>
        <name>L-glutamate</name>
        <dbReference type="ChEBI" id="CHEBI:29985"/>
    </ligand>
</feature>
<feature type="modified residue" description="O-AMP-tyrosine" evidence="4">
    <location>
        <position position="398"/>
    </location>
</feature>
<feature type="sequence conflict" description="In Ref. 1; CAA71265." evidence="8" ref="1">
    <original>GWK</original>
    <variation>AE</variation>
    <location>
        <begin position="58"/>
        <end position="60"/>
    </location>
</feature>
<feature type="sequence conflict" description="In Ref. 1; CAA71265." evidence="8" ref="1">
    <original>G</original>
    <variation>R</variation>
    <location>
        <position position="279"/>
    </location>
</feature>
<feature type="sequence conflict" description="In Ref. 1; CAA71265." evidence="8" ref="1">
    <original>G</original>
    <variation>C</variation>
    <location>
        <position position="413"/>
    </location>
</feature>
<dbReference type="EC" id="6.3.1.2" evidence="1"/>
<dbReference type="EMBL" id="Y10213">
    <property type="protein sequence ID" value="CAA71265.1"/>
    <property type="molecule type" value="Genomic_DNA"/>
</dbReference>
<dbReference type="EMBL" id="AP009384">
    <property type="protein sequence ID" value="BAF87599.1"/>
    <property type="molecule type" value="Genomic_DNA"/>
</dbReference>
<dbReference type="RefSeq" id="WP_012170129.1">
    <property type="nucleotide sequence ID" value="NC_009937.1"/>
</dbReference>
<dbReference type="SMR" id="P94126"/>
<dbReference type="STRING" id="438753.AZC_1601"/>
<dbReference type="KEGG" id="azc:AZC_1601"/>
<dbReference type="eggNOG" id="COG0174">
    <property type="taxonomic scope" value="Bacteria"/>
</dbReference>
<dbReference type="HOGENOM" id="CLU_017290_1_2_5"/>
<dbReference type="Proteomes" id="UP000000270">
    <property type="component" value="Chromosome"/>
</dbReference>
<dbReference type="GO" id="GO:0005737">
    <property type="term" value="C:cytoplasm"/>
    <property type="evidence" value="ECO:0007669"/>
    <property type="project" value="UniProtKB-SubCell"/>
</dbReference>
<dbReference type="GO" id="GO:0016020">
    <property type="term" value="C:membrane"/>
    <property type="evidence" value="ECO:0007669"/>
    <property type="project" value="TreeGrafter"/>
</dbReference>
<dbReference type="GO" id="GO:0005524">
    <property type="term" value="F:ATP binding"/>
    <property type="evidence" value="ECO:0007669"/>
    <property type="project" value="UniProtKB-KW"/>
</dbReference>
<dbReference type="GO" id="GO:0004356">
    <property type="term" value="F:glutamine synthetase activity"/>
    <property type="evidence" value="ECO:0007669"/>
    <property type="project" value="UniProtKB-EC"/>
</dbReference>
<dbReference type="GO" id="GO:0046872">
    <property type="term" value="F:metal ion binding"/>
    <property type="evidence" value="ECO:0007669"/>
    <property type="project" value="UniProtKB-KW"/>
</dbReference>
<dbReference type="GO" id="GO:0006542">
    <property type="term" value="P:glutamine biosynthetic process"/>
    <property type="evidence" value="ECO:0007669"/>
    <property type="project" value="InterPro"/>
</dbReference>
<dbReference type="GO" id="GO:0009399">
    <property type="term" value="P:nitrogen fixation"/>
    <property type="evidence" value="ECO:0007669"/>
    <property type="project" value="UniProtKB-KW"/>
</dbReference>
<dbReference type="GO" id="GO:0019740">
    <property type="term" value="P:nitrogen utilization"/>
    <property type="evidence" value="ECO:0007669"/>
    <property type="project" value="TreeGrafter"/>
</dbReference>
<dbReference type="FunFam" id="3.10.20.70:FF:000001">
    <property type="entry name" value="Glutamine synthetase"/>
    <property type="match status" value="1"/>
</dbReference>
<dbReference type="FunFam" id="3.30.590.10:FF:000001">
    <property type="entry name" value="Glutamine synthetase"/>
    <property type="match status" value="1"/>
</dbReference>
<dbReference type="Gene3D" id="3.10.20.70">
    <property type="entry name" value="Glutamine synthetase, N-terminal domain"/>
    <property type="match status" value="1"/>
</dbReference>
<dbReference type="Gene3D" id="3.30.590.10">
    <property type="entry name" value="Glutamine synthetase/guanido kinase, catalytic domain"/>
    <property type="match status" value="1"/>
</dbReference>
<dbReference type="InterPro" id="IPR008147">
    <property type="entry name" value="Gln_synt_N"/>
</dbReference>
<dbReference type="InterPro" id="IPR036651">
    <property type="entry name" value="Gln_synt_N_sf"/>
</dbReference>
<dbReference type="InterPro" id="IPR014746">
    <property type="entry name" value="Gln_synth/guanido_kin_cat_dom"/>
</dbReference>
<dbReference type="InterPro" id="IPR008146">
    <property type="entry name" value="Gln_synth_cat_dom"/>
</dbReference>
<dbReference type="InterPro" id="IPR027303">
    <property type="entry name" value="Gln_synth_gly_rich_site"/>
</dbReference>
<dbReference type="InterPro" id="IPR004809">
    <property type="entry name" value="Gln_synth_I"/>
</dbReference>
<dbReference type="InterPro" id="IPR001637">
    <property type="entry name" value="Gln_synth_I_adenylation_site"/>
</dbReference>
<dbReference type="InterPro" id="IPR027302">
    <property type="entry name" value="Gln_synth_N_conserv_site"/>
</dbReference>
<dbReference type="NCBIfam" id="TIGR00653">
    <property type="entry name" value="GlnA"/>
    <property type="match status" value="1"/>
</dbReference>
<dbReference type="PANTHER" id="PTHR43407">
    <property type="entry name" value="GLUTAMINE SYNTHETASE"/>
    <property type="match status" value="1"/>
</dbReference>
<dbReference type="PANTHER" id="PTHR43407:SF2">
    <property type="entry name" value="GLUTAMINE SYNTHETASE"/>
    <property type="match status" value="1"/>
</dbReference>
<dbReference type="Pfam" id="PF00120">
    <property type="entry name" value="Gln-synt_C"/>
    <property type="match status" value="1"/>
</dbReference>
<dbReference type="Pfam" id="PF03951">
    <property type="entry name" value="Gln-synt_N"/>
    <property type="match status" value="1"/>
</dbReference>
<dbReference type="SMART" id="SM01230">
    <property type="entry name" value="Gln-synt_C"/>
    <property type="match status" value="1"/>
</dbReference>
<dbReference type="SUPFAM" id="SSF54368">
    <property type="entry name" value="Glutamine synthetase, N-terminal domain"/>
    <property type="match status" value="1"/>
</dbReference>
<dbReference type="SUPFAM" id="SSF55931">
    <property type="entry name" value="Glutamine synthetase/guanido kinase"/>
    <property type="match status" value="1"/>
</dbReference>
<dbReference type="PROSITE" id="PS00180">
    <property type="entry name" value="GLNA_1"/>
    <property type="match status" value="1"/>
</dbReference>
<dbReference type="PROSITE" id="PS00182">
    <property type="entry name" value="GLNA_ADENYLATION"/>
    <property type="match status" value="1"/>
</dbReference>
<dbReference type="PROSITE" id="PS00181">
    <property type="entry name" value="GLNA_ATP"/>
    <property type="match status" value="1"/>
</dbReference>
<dbReference type="PROSITE" id="PS51986">
    <property type="entry name" value="GS_BETA_GRASP"/>
    <property type="match status" value="1"/>
</dbReference>
<dbReference type="PROSITE" id="PS51987">
    <property type="entry name" value="GS_CATALYTIC"/>
    <property type="match status" value="1"/>
</dbReference>
<keyword id="KW-0067">ATP-binding</keyword>
<keyword id="KW-0963">Cytoplasm</keyword>
<keyword id="KW-0436">Ligase</keyword>
<keyword id="KW-0460">Magnesium</keyword>
<keyword id="KW-0479">Metal-binding</keyword>
<keyword id="KW-0535">Nitrogen fixation</keyword>
<keyword id="KW-0547">Nucleotide-binding</keyword>
<keyword id="KW-0597">Phosphoprotein</keyword>
<keyword id="KW-1185">Reference proteome</keyword>
<gene>
    <name evidence="1" type="primary">glnA</name>
    <name type="ordered locus">AZC_1601</name>
</gene>
<comment type="function">
    <text evidence="1">Catalyzes the ATP-dependent biosynthesis of glutamine from glutamate and ammonia.</text>
</comment>
<comment type="catalytic activity">
    <reaction evidence="1">
        <text>L-glutamate + NH4(+) + ATP = L-glutamine + ADP + phosphate + H(+)</text>
        <dbReference type="Rhea" id="RHEA:16169"/>
        <dbReference type="ChEBI" id="CHEBI:15378"/>
        <dbReference type="ChEBI" id="CHEBI:28938"/>
        <dbReference type="ChEBI" id="CHEBI:29985"/>
        <dbReference type="ChEBI" id="CHEBI:30616"/>
        <dbReference type="ChEBI" id="CHEBI:43474"/>
        <dbReference type="ChEBI" id="CHEBI:58359"/>
        <dbReference type="ChEBI" id="CHEBI:456216"/>
        <dbReference type="EC" id="6.3.1.2"/>
    </reaction>
</comment>
<comment type="cofactor">
    <cofactor evidence="4">
        <name>Mg(2+)</name>
        <dbReference type="ChEBI" id="CHEBI:18420"/>
    </cofactor>
    <text evidence="4">Binds 2 Mg(2+) ions per subunit.</text>
</comment>
<comment type="activity regulation">
    <text evidence="5">The activity of this enzyme could be controlled by adenylation under conditions of abundant glutamine.</text>
</comment>
<comment type="subunit">
    <text evidence="1">Oligomer of 12 subunits arranged in the form of two hexameric ring.</text>
</comment>
<comment type="subcellular location">
    <subcellularLocation>
        <location evidence="4">Cytoplasm</location>
    </subcellularLocation>
</comment>
<comment type="similarity">
    <text evidence="8">Belongs to the glutamine synthetase family.</text>
</comment>
<reference key="1">
    <citation type="journal article" date="1997" name="J. Bacteriol.">
        <title>Characterization of Azorhizobium caulinodans glnB and glnA genes: involvement of the P(II) protein in symbiotic nitrogen fixation.</title>
        <authorList>
            <person name="Michel-Reydellet N."/>
            <person name="Desnoues N."/>
            <person name="Elmerich C."/>
            <person name="Kaminski P.A."/>
        </authorList>
    </citation>
    <scope>NUCLEOTIDE SEQUENCE [GENOMIC DNA]</scope>
</reference>
<reference key="2">
    <citation type="submission" date="2007-04" db="EMBL/GenBank/DDBJ databases">
        <title>Complete genome sequence of the nitrogen-fixing bacterium Azorhizobium caulinodans ORS571.</title>
        <authorList>
            <person name="Lee K.B."/>
            <person name="Backer P.D."/>
            <person name="Aono T."/>
            <person name="Liu C.T."/>
            <person name="Suzuki S."/>
            <person name="Suzuki T."/>
            <person name="Kaneko T."/>
            <person name="Yamada M."/>
            <person name="Tabata S."/>
            <person name="Kupfer D.M."/>
            <person name="Najar F.Z."/>
            <person name="Wiley G.B."/>
            <person name="Roe B."/>
            <person name="Binnewies T."/>
            <person name="Ussery D."/>
            <person name="Vereecke D."/>
            <person name="Gevers D."/>
            <person name="Holsters M."/>
            <person name="Oyaizu H."/>
        </authorList>
    </citation>
    <scope>NUCLEOTIDE SEQUENCE [LARGE SCALE GENOMIC DNA]</scope>
    <source>
        <strain>ATCC 43989 / DSM 5975 / JCM 20966 / LMG 6465 / NBRC 14845 / NCIMB 13405 / ORS 571</strain>
    </source>
</reference>
<accession>P94126</accession>
<accession>A8HYD0</accession>